<sequence>MTETTPAPQTPAAPAGPAQSFVLERPIQTVGRRKEAVVRVRLVPGTGKFDLNGRSLEDYFPNKVHQQLIKAPLVTVDRVESFDIFAHLGGGGPSGQAGALRLGIARALILVSPEDRPALKKAGFLTRDPRATERKKYGLKKARKAPQYSKR</sequence>
<dbReference type="EMBL" id="AE000516">
    <property type="protein sequence ID" value="AAK47888.1"/>
    <property type="molecule type" value="Genomic_DNA"/>
</dbReference>
<dbReference type="PIR" id="H70976">
    <property type="entry name" value="H70976"/>
</dbReference>
<dbReference type="RefSeq" id="WP_003418308.1">
    <property type="nucleotide sequence ID" value="NZ_KK341227.1"/>
</dbReference>
<dbReference type="SMR" id="P9WH24"/>
<dbReference type="GeneID" id="45427432"/>
<dbReference type="KEGG" id="mtc:MT3547"/>
<dbReference type="PATRIC" id="fig|83331.31.peg.3806"/>
<dbReference type="HOGENOM" id="CLU_046483_2_0_11"/>
<dbReference type="Proteomes" id="UP000001020">
    <property type="component" value="Chromosome"/>
</dbReference>
<dbReference type="GO" id="GO:0005737">
    <property type="term" value="C:cytoplasm"/>
    <property type="evidence" value="ECO:0007669"/>
    <property type="project" value="UniProtKB-ARBA"/>
</dbReference>
<dbReference type="GO" id="GO:0015935">
    <property type="term" value="C:small ribosomal subunit"/>
    <property type="evidence" value="ECO:0007669"/>
    <property type="project" value="TreeGrafter"/>
</dbReference>
<dbReference type="GO" id="GO:0003723">
    <property type="term" value="F:RNA binding"/>
    <property type="evidence" value="ECO:0007669"/>
    <property type="project" value="TreeGrafter"/>
</dbReference>
<dbReference type="GO" id="GO:0003735">
    <property type="term" value="F:structural constituent of ribosome"/>
    <property type="evidence" value="ECO:0007669"/>
    <property type="project" value="InterPro"/>
</dbReference>
<dbReference type="GO" id="GO:0006412">
    <property type="term" value="P:translation"/>
    <property type="evidence" value="ECO:0007669"/>
    <property type="project" value="UniProtKB-UniRule"/>
</dbReference>
<dbReference type="FunFam" id="3.30.230.10:FF:000001">
    <property type="entry name" value="30S ribosomal protein S9"/>
    <property type="match status" value="1"/>
</dbReference>
<dbReference type="Gene3D" id="3.30.230.10">
    <property type="match status" value="1"/>
</dbReference>
<dbReference type="HAMAP" id="MF_00532_B">
    <property type="entry name" value="Ribosomal_uS9_B"/>
    <property type="match status" value="1"/>
</dbReference>
<dbReference type="InterPro" id="IPR020568">
    <property type="entry name" value="Ribosomal_Su5_D2-typ_SF"/>
</dbReference>
<dbReference type="InterPro" id="IPR000754">
    <property type="entry name" value="Ribosomal_uS9"/>
</dbReference>
<dbReference type="InterPro" id="IPR023035">
    <property type="entry name" value="Ribosomal_uS9_bac/plastid"/>
</dbReference>
<dbReference type="InterPro" id="IPR020574">
    <property type="entry name" value="Ribosomal_uS9_CS"/>
</dbReference>
<dbReference type="InterPro" id="IPR014721">
    <property type="entry name" value="Ribsml_uS5_D2-typ_fold_subgr"/>
</dbReference>
<dbReference type="NCBIfam" id="NF001099">
    <property type="entry name" value="PRK00132.1"/>
    <property type="match status" value="1"/>
</dbReference>
<dbReference type="PANTHER" id="PTHR21569">
    <property type="entry name" value="RIBOSOMAL PROTEIN S9"/>
    <property type="match status" value="1"/>
</dbReference>
<dbReference type="PANTHER" id="PTHR21569:SF1">
    <property type="entry name" value="SMALL RIBOSOMAL SUBUNIT PROTEIN US9M"/>
    <property type="match status" value="1"/>
</dbReference>
<dbReference type="Pfam" id="PF00380">
    <property type="entry name" value="Ribosomal_S9"/>
    <property type="match status" value="1"/>
</dbReference>
<dbReference type="SUPFAM" id="SSF54211">
    <property type="entry name" value="Ribosomal protein S5 domain 2-like"/>
    <property type="match status" value="1"/>
</dbReference>
<dbReference type="PROSITE" id="PS00360">
    <property type="entry name" value="RIBOSOMAL_S9"/>
    <property type="match status" value="1"/>
</dbReference>
<proteinExistence type="inferred from homology"/>
<keyword id="KW-1185">Reference proteome</keyword>
<keyword id="KW-0687">Ribonucleoprotein</keyword>
<keyword id="KW-0689">Ribosomal protein</keyword>
<evidence type="ECO:0000256" key="1">
    <source>
        <dbReference type="SAM" id="MobiDB-lite"/>
    </source>
</evidence>
<evidence type="ECO:0000305" key="2"/>
<name>RS9_MYCTO</name>
<protein>
    <recommendedName>
        <fullName evidence="2">Small ribosomal subunit protein uS9</fullName>
    </recommendedName>
    <alternativeName>
        <fullName>30S ribosomal protein S9</fullName>
    </alternativeName>
</protein>
<accession>P9WH24</accession>
<accession>L0TCS1</accession>
<accession>O06259</accession>
<accession>P66639</accession>
<organism>
    <name type="scientific">Mycobacterium tuberculosis (strain CDC 1551 / Oshkosh)</name>
    <dbReference type="NCBI Taxonomy" id="83331"/>
    <lineage>
        <taxon>Bacteria</taxon>
        <taxon>Bacillati</taxon>
        <taxon>Actinomycetota</taxon>
        <taxon>Actinomycetes</taxon>
        <taxon>Mycobacteriales</taxon>
        <taxon>Mycobacteriaceae</taxon>
        <taxon>Mycobacterium</taxon>
        <taxon>Mycobacterium tuberculosis complex</taxon>
    </lineage>
</organism>
<feature type="chain" id="PRO_0000428261" description="Small ribosomal subunit protein uS9">
    <location>
        <begin position="1"/>
        <end position="151"/>
    </location>
</feature>
<feature type="region of interest" description="Disordered" evidence="1">
    <location>
        <begin position="1"/>
        <end position="20"/>
    </location>
</feature>
<feature type="region of interest" description="Disordered" evidence="1">
    <location>
        <begin position="121"/>
        <end position="151"/>
    </location>
</feature>
<feature type="compositionally biased region" description="Low complexity" evidence="1">
    <location>
        <begin position="1"/>
        <end position="19"/>
    </location>
</feature>
<feature type="compositionally biased region" description="Basic and acidic residues" evidence="1">
    <location>
        <begin position="127"/>
        <end position="136"/>
    </location>
</feature>
<feature type="compositionally biased region" description="Basic residues" evidence="1">
    <location>
        <begin position="137"/>
        <end position="151"/>
    </location>
</feature>
<comment type="similarity">
    <text evidence="2">Belongs to the universal ribosomal protein uS9 family.</text>
</comment>
<gene>
    <name type="primary">rpsI</name>
    <name type="ordered locus">MT3547</name>
</gene>
<reference key="1">
    <citation type="journal article" date="2002" name="J. Bacteriol.">
        <title>Whole-genome comparison of Mycobacterium tuberculosis clinical and laboratory strains.</title>
        <authorList>
            <person name="Fleischmann R.D."/>
            <person name="Alland D."/>
            <person name="Eisen J.A."/>
            <person name="Carpenter L."/>
            <person name="White O."/>
            <person name="Peterson J.D."/>
            <person name="DeBoy R.T."/>
            <person name="Dodson R.J."/>
            <person name="Gwinn M.L."/>
            <person name="Haft D.H."/>
            <person name="Hickey E.K."/>
            <person name="Kolonay J.F."/>
            <person name="Nelson W.C."/>
            <person name="Umayam L.A."/>
            <person name="Ermolaeva M.D."/>
            <person name="Salzberg S.L."/>
            <person name="Delcher A."/>
            <person name="Utterback T.R."/>
            <person name="Weidman J.F."/>
            <person name="Khouri H.M."/>
            <person name="Gill J."/>
            <person name="Mikula A."/>
            <person name="Bishai W."/>
            <person name="Jacobs W.R. Jr."/>
            <person name="Venter J.C."/>
            <person name="Fraser C.M."/>
        </authorList>
    </citation>
    <scope>NUCLEOTIDE SEQUENCE [LARGE SCALE GENOMIC DNA]</scope>
    <source>
        <strain>CDC 1551 / Oshkosh</strain>
    </source>
</reference>